<gene>
    <name evidence="1" type="primary">ygiB</name>
    <name type="ordered locus">E2348C_3332</name>
</gene>
<organism>
    <name type="scientific">Escherichia coli O127:H6 (strain E2348/69 / EPEC)</name>
    <dbReference type="NCBI Taxonomy" id="574521"/>
    <lineage>
        <taxon>Bacteria</taxon>
        <taxon>Pseudomonadati</taxon>
        <taxon>Pseudomonadota</taxon>
        <taxon>Gammaproteobacteria</taxon>
        <taxon>Enterobacterales</taxon>
        <taxon>Enterobacteriaceae</taxon>
        <taxon>Escherichia</taxon>
    </lineage>
</organism>
<comment type="similarity">
    <text evidence="1">Belongs to the UPF0441 family.</text>
</comment>
<accession>B7UIU7</accession>
<keyword id="KW-1185">Reference proteome</keyword>
<proteinExistence type="inferred from homology"/>
<dbReference type="EMBL" id="FM180568">
    <property type="protein sequence ID" value="CAS10880.1"/>
    <property type="molecule type" value="Genomic_DNA"/>
</dbReference>
<dbReference type="RefSeq" id="WP_000831543.1">
    <property type="nucleotide sequence ID" value="NC_011601.1"/>
</dbReference>
<dbReference type="SMR" id="B7UIU7"/>
<dbReference type="KEGG" id="ecg:E2348C_3332"/>
<dbReference type="HOGENOM" id="CLU_095624_0_0_6"/>
<dbReference type="Proteomes" id="UP000008205">
    <property type="component" value="Chromosome"/>
</dbReference>
<dbReference type="HAMAP" id="MF_01188">
    <property type="entry name" value="UPF0441"/>
    <property type="match status" value="1"/>
</dbReference>
<dbReference type="InterPro" id="IPR009576">
    <property type="entry name" value="Biofilm_formation_YgiB"/>
</dbReference>
<dbReference type="NCBIfam" id="NF008655">
    <property type="entry name" value="PRK11653.1"/>
    <property type="match status" value="1"/>
</dbReference>
<dbReference type="Pfam" id="PF06693">
    <property type="entry name" value="DUF1190"/>
    <property type="match status" value="1"/>
</dbReference>
<sequence length="223" mass="23479">MKRTKSIRHASFRKNWSARHLTPVALAVATVFMLAGCEKSDETVSLYQNADDCSAANPGKSAECTTAYNNALKEAERTAPKYATREDCVAEFGEGQCQQAPAQAGMAPENQAQAQQSSGSFWMPLMAGYMMGRLMGGGAGFAQQPLFSSKNPASPAYGKYTDATGKNYGAAQPGRTMTVPKTAMAPKPATTTTVTRGGFGESVAKQSTMQRSATGTSSRSMGG</sequence>
<feature type="chain" id="PRO_1000164494" description="UPF0441 protein YgiB">
    <location>
        <begin position="1"/>
        <end position="223"/>
    </location>
</feature>
<feature type="region of interest" description="Disordered" evidence="2">
    <location>
        <begin position="178"/>
        <end position="223"/>
    </location>
</feature>
<feature type="compositionally biased region" description="Low complexity" evidence="2">
    <location>
        <begin position="178"/>
        <end position="195"/>
    </location>
</feature>
<feature type="compositionally biased region" description="Polar residues" evidence="2">
    <location>
        <begin position="204"/>
        <end position="223"/>
    </location>
</feature>
<reference key="1">
    <citation type="journal article" date="2009" name="J. Bacteriol.">
        <title>Complete genome sequence and comparative genome analysis of enteropathogenic Escherichia coli O127:H6 strain E2348/69.</title>
        <authorList>
            <person name="Iguchi A."/>
            <person name="Thomson N.R."/>
            <person name="Ogura Y."/>
            <person name="Saunders D."/>
            <person name="Ooka T."/>
            <person name="Henderson I.R."/>
            <person name="Harris D."/>
            <person name="Asadulghani M."/>
            <person name="Kurokawa K."/>
            <person name="Dean P."/>
            <person name="Kenny B."/>
            <person name="Quail M.A."/>
            <person name="Thurston S."/>
            <person name="Dougan G."/>
            <person name="Hayashi T."/>
            <person name="Parkhill J."/>
            <person name="Frankel G."/>
        </authorList>
    </citation>
    <scope>NUCLEOTIDE SEQUENCE [LARGE SCALE GENOMIC DNA]</scope>
    <source>
        <strain>E2348/69 / EPEC</strain>
    </source>
</reference>
<evidence type="ECO:0000255" key="1">
    <source>
        <dbReference type="HAMAP-Rule" id="MF_01188"/>
    </source>
</evidence>
<evidence type="ECO:0000256" key="2">
    <source>
        <dbReference type="SAM" id="MobiDB-lite"/>
    </source>
</evidence>
<name>YGIB_ECO27</name>
<protein>
    <recommendedName>
        <fullName evidence="1">UPF0441 protein YgiB</fullName>
    </recommendedName>
</protein>